<proteinExistence type="inferred from homology"/>
<dbReference type="EC" id="2.2.1.7" evidence="1"/>
<dbReference type="EMBL" id="CP000967">
    <property type="protein sequence ID" value="ACD59519.1"/>
    <property type="molecule type" value="Genomic_DNA"/>
</dbReference>
<dbReference type="RefSeq" id="WP_011258730.1">
    <property type="nucleotide sequence ID" value="NC_010717.2"/>
</dbReference>
<dbReference type="SMR" id="B2SQV8"/>
<dbReference type="KEGG" id="xop:PXO_01171"/>
<dbReference type="eggNOG" id="COG1154">
    <property type="taxonomic scope" value="Bacteria"/>
</dbReference>
<dbReference type="HOGENOM" id="CLU_009227_1_4_6"/>
<dbReference type="UniPathway" id="UPA00064">
    <property type="reaction ID" value="UER00091"/>
</dbReference>
<dbReference type="Proteomes" id="UP000001740">
    <property type="component" value="Chromosome"/>
</dbReference>
<dbReference type="GO" id="GO:0005829">
    <property type="term" value="C:cytosol"/>
    <property type="evidence" value="ECO:0007669"/>
    <property type="project" value="TreeGrafter"/>
</dbReference>
<dbReference type="GO" id="GO:0008661">
    <property type="term" value="F:1-deoxy-D-xylulose-5-phosphate synthase activity"/>
    <property type="evidence" value="ECO:0007669"/>
    <property type="project" value="UniProtKB-UniRule"/>
</dbReference>
<dbReference type="GO" id="GO:0000287">
    <property type="term" value="F:magnesium ion binding"/>
    <property type="evidence" value="ECO:0007669"/>
    <property type="project" value="UniProtKB-UniRule"/>
</dbReference>
<dbReference type="GO" id="GO:0030976">
    <property type="term" value="F:thiamine pyrophosphate binding"/>
    <property type="evidence" value="ECO:0007669"/>
    <property type="project" value="UniProtKB-UniRule"/>
</dbReference>
<dbReference type="GO" id="GO:0052865">
    <property type="term" value="P:1-deoxy-D-xylulose 5-phosphate biosynthetic process"/>
    <property type="evidence" value="ECO:0007669"/>
    <property type="project" value="UniProtKB-UniPathway"/>
</dbReference>
<dbReference type="GO" id="GO:0019288">
    <property type="term" value="P:isopentenyl diphosphate biosynthetic process, methylerythritol 4-phosphate pathway"/>
    <property type="evidence" value="ECO:0007669"/>
    <property type="project" value="TreeGrafter"/>
</dbReference>
<dbReference type="GO" id="GO:0016114">
    <property type="term" value="P:terpenoid biosynthetic process"/>
    <property type="evidence" value="ECO:0007669"/>
    <property type="project" value="UniProtKB-UniRule"/>
</dbReference>
<dbReference type="GO" id="GO:0009228">
    <property type="term" value="P:thiamine biosynthetic process"/>
    <property type="evidence" value="ECO:0007669"/>
    <property type="project" value="UniProtKB-UniRule"/>
</dbReference>
<dbReference type="CDD" id="cd02007">
    <property type="entry name" value="TPP_DXS"/>
    <property type="match status" value="1"/>
</dbReference>
<dbReference type="CDD" id="cd07033">
    <property type="entry name" value="TPP_PYR_DXS_TK_like"/>
    <property type="match status" value="1"/>
</dbReference>
<dbReference type="FunFam" id="3.40.50.920:FF:000002">
    <property type="entry name" value="1-deoxy-D-xylulose-5-phosphate synthase"/>
    <property type="match status" value="1"/>
</dbReference>
<dbReference type="FunFam" id="3.40.50.970:FF:000005">
    <property type="entry name" value="1-deoxy-D-xylulose-5-phosphate synthase"/>
    <property type="match status" value="1"/>
</dbReference>
<dbReference type="Gene3D" id="3.40.50.920">
    <property type="match status" value="1"/>
</dbReference>
<dbReference type="Gene3D" id="3.40.50.970">
    <property type="match status" value="2"/>
</dbReference>
<dbReference type="HAMAP" id="MF_00315">
    <property type="entry name" value="DXP_synth"/>
    <property type="match status" value="1"/>
</dbReference>
<dbReference type="InterPro" id="IPR005477">
    <property type="entry name" value="Dxylulose-5-P_synthase"/>
</dbReference>
<dbReference type="InterPro" id="IPR029061">
    <property type="entry name" value="THDP-binding"/>
</dbReference>
<dbReference type="InterPro" id="IPR009014">
    <property type="entry name" value="Transketo_C/PFOR_II"/>
</dbReference>
<dbReference type="InterPro" id="IPR005475">
    <property type="entry name" value="Transketolase-like_Pyr-bd"/>
</dbReference>
<dbReference type="InterPro" id="IPR020826">
    <property type="entry name" value="Transketolase_BS"/>
</dbReference>
<dbReference type="InterPro" id="IPR033248">
    <property type="entry name" value="Transketolase_C"/>
</dbReference>
<dbReference type="InterPro" id="IPR049557">
    <property type="entry name" value="Transketolase_CS"/>
</dbReference>
<dbReference type="NCBIfam" id="TIGR00204">
    <property type="entry name" value="dxs"/>
    <property type="match status" value="1"/>
</dbReference>
<dbReference type="NCBIfam" id="NF003933">
    <property type="entry name" value="PRK05444.2-2"/>
    <property type="match status" value="1"/>
</dbReference>
<dbReference type="PANTHER" id="PTHR43322">
    <property type="entry name" value="1-D-DEOXYXYLULOSE 5-PHOSPHATE SYNTHASE-RELATED"/>
    <property type="match status" value="1"/>
</dbReference>
<dbReference type="PANTHER" id="PTHR43322:SF5">
    <property type="entry name" value="1-DEOXY-D-XYLULOSE-5-PHOSPHATE SYNTHASE, CHLOROPLASTIC"/>
    <property type="match status" value="1"/>
</dbReference>
<dbReference type="Pfam" id="PF13292">
    <property type="entry name" value="DXP_synthase_N"/>
    <property type="match status" value="1"/>
</dbReference>
<dbReference type="Pfam" id="PF02779">
    <property type="entry name" value="Transket_pyr"/>
    <property type="match status" value="1"/>
</dbReference>
<dbReference type="Pfam" id="PF02780">
    <property type="entry name" value="Transketolase_C"/>
    <property type="match status" value="1"/>
</dbReference>
<dbReference type="SMART" id="SM00861">
    <property type="entry name" value="Transket_pyr"/>
    <property type="match status" value="1"/>
</dbReference>
<dbReference type="SUPFAM" id="SSF52518">
    <property type="entry name" value="Thiamin diphosphate-binding fold (THDP-binding)"/>
    <property type="match status" value="2"/>
</dbReference>
<dbReference type="SUPFAM" id="SSF52922">
    <property type="entry name" value="TK C-terminal domain-like"/>
    <property type="match status" value="1"/>
</dbReference>
<dbReference type="PROSITE" id="PS00801">
    <property type="entry name" value="TRANSKETOLASE_1"/>
    <property type="match status" value="1"/>
</dbReference>
<dbReference type="PROSITE" id="PS00802">
    <property type="entry name" value="TRANSKETOLASE_2"/>
    <property type="match status" value="1"/>
</dbReference>
<sequence length="638" mass="68604">MIDTTRYPRLSRIHTPDDLRRFDEAELTVIAEELRSYLIESVGKSGGHFAAGLGVIELTVALHYLYQTPVDQLVWDVGHQTYPHKILTGRRDQIHTVKQKDGVAPFPKREESVYDTFGVGHSSTSISAALGMAIAAQRNGDDRKVVAVIGDGAMTAGMVYEALNHAGGMDPEPNLLVILNDNRMSISEAVGGLTKMLGRASGSRTLNAIREGGKKILGDKKNNPTARFVRRWEEHWKGMFVPSTLFEEMGFHYTGPIDGHDLPRLVGALKTLQTLKGPQLLHVITTKGKGYELAEGDQIGYHAVSPFDPSKGLVAKGGAKKPTYTDVFSDWVCDMAAAEPKLLVITPAMREGSGLVRFSKEYPQRYFDVAIAEQHAVTLAAGMATQGAKPVVAIYSTFLQRGYDQLVHDVAVQQLDVLFAIDRGGVVGPDGATHAGNLDLSFLRCVPHMVVMAPADEAECRQMLSTGMQYQGPAAVRYPRGTGPGAALDSSLATLPIGKAQLRHSGTRIALLGFGATVDAAEAVGRDLGLTVVNMRFVKPLDKAMLLELAKTHEGFVTIEDNVVAGGAGSGVSELLNAEAITLPMLHLGLPDSFQHHASREDLLAEAGIDQAGIRTAVLKRWPQLMTGKTPSLNAAAG</sequence>
<reference key="1">
    <citation type="journal article" date="2008" name="BMC Genomics">
        <title>Genome sequence and rapid evolution of the rice pathogen Xanthomonas oryzae pv. oryzae PXO99A.</title>
        <authorList>
            <person name="Salzberg S.L."/>
            <person name="Sommer D.D."/>
            <person name="Schatz M.C."/>
            <person name="Phillippy A.M."/>
            <person name="Rabinowicz P.D."/>
            <person name="Tsuge S."/>
            <person name="Furutani A."/>
            <person name="Ochiai H."/>
            <person name="Delcher A.L."/>
            <person name="Kelley D."/>
            <person name="Madupu R."/>
            <person name="Puiu D."/>
            <person name="Radune D."/>
            <person name="Shumway M."/>
            <person name="Trapnell C."/>
            <person name="Aparna G."/>
            <person name="Jha G."/>
            <person name="Pandey A."/>
            <person name="Patil P.B."/>
            <person name="Ishihara H."/>
            <person name="Meyer D.F."/>
            <person name="Szurek B."/>
            <person name="Verdier V."/>
            <person name="Koebnik R."/>
            <person name="Dow J.M."/>
            <person name="Ryan R.P."/>
            <person name="Hirata H."/>
            <person name="Tsuyumu S."/>
            <person name="Won Lee S."/>
            <person name="Seo Y.-S."/>
            <person name="Sriariyanum M."/>
            <person name="Ronald P.C."/>
            <person name="Sonti R.V."/>
            <person name="Van Sluys M.-A."/>
            <person name="Leach J.E."/>
            <person name="White F.F."/>
            <person name="Bogdanove A.J."/>
        </authorList>
    </citation>
    <scope>NUCLEOTIDE SEQUENCE [LARGE SCALE GENOMIC DNA]</scope>
    <source>
        <strain>PXO99A</strain>
    </source>
</reference>
<feature type="chain" id="PRO_1000115780" description="1-deoxy-D-xylulose-5-phosphate synthase">
    <location>
        <begin position="1"/>
        <end position="638"/>
    </location>
</feature>
<feature type="binding site" evidence="1">
    <location>
        <position position="79"/>
    </location>
    <ligand>
        <name>thiamine diphosphate</name>
        <dbReference type="ChEBI" id="CHEBI:58937"/>
    </ligand>
</feature>
<feature type="binding site" evidence="1">
    <location>
        <begin position="120"/>
        <end position="122"/>
    </location>
    <ligand>
        <name>thiamine diphosphate</name>
        <dbReference type="ChEBI" id="CHEBI:58937"/>
    </ligand>
</feature>
<feature type="binding site" evidence="1">
    <location>
        <position position="151"/>
    </location>
    <ligand>
        <name>Mg(2+)</name>
        <dbReference type="ChEBI" id="CHEBI:18420"/>
    </ligand>
</feature>
<feature type="binding site" evidence="1">
    <location>
        <begin position="152"/>
        <end position="153"/>
    </location>
    <ligand>
        <name>thiamine diphosphate</name>
        <dbReference type="ChEBI" id="CHEBI:58937"/>
    </ligand>
</feature>
<feature type="binding site" evidence="1">
    <location>
        <position position="182"/>
    </location>
    <ligand>
        <name>Mg(2+)</name>
        <dbReference type="ChEBI" id="CHEBI:18420"/>
    </ligand>
</feature>
<feature type="binding site" evidence="1">
    <location>
        <position position="182"/>
    </location>
    <ligand>
        <name>thiamine diphosphate</name>
        <dbReference type="ChEBI" id="CHEBI:58937"/>
    </ligand>
</feature>
<feature type="binding site" evidence="1">
    <location>
        <position position="291"/>
    </location>
    <ligand>
        <name>thiamine diphosphate</name>
        <dbReference type="ChEBI" id="CHEBI:58937"/>
    </ligand>
</feature>
<feature type="binding site" evidence="1">
    <location>
        <position position="373"/>
    </location>
    <ligand>
        <name>thiamine diphosphate</name>
        <dbReference type="ChEBI" id="CHEBI:58937"/>
    </ligand>
</feature>
<comment type="function">
    <text evidence="1">Catalyzes the acyloin condensation reaction between C atoms 2 and 3 of pyruvate and glyceraldehyde 3-phosphate to yield 1-deoxy-D-xylulose-5-phosphate (DXP).</text>
</comment>
<comment type="catalytic activity">
    <reaction evidence="1">
        <text>D-glyceraldehyde 3-phosphate + pyruvate + H(+) = 1-deoxy-D-xylulose 5-phosphate + CO2</text>
        <dbReference type="Rhea" id="RHEA:12605"/>
        <dbReference type="ChEBI" id="CHEBI:15361"/>
        <dbReference type="ChEBI" id="CHEBI:15378"/>
        <dbReference type="ChEBI" id="CHEBI:16526"/>
        <dbReference type="ChEBI" id="CHEBI:57792"/>
        <dbReference type="ChEBI" id="CHEBI:59776"/>
        <dbReference type="EC" id="2.2.1.7"/>
    </reaction>
</comment>
<comment type="cofactor">
    <cofactor evidence="1">
        <name>Mg(2+)</name>
        <dbReference type="ChEBI" id="CHEBI:18420"/>
    </cofactor>
    <text evidence="1">Binds 1 Mg(2+) ion per subunit.</text>
</comment>
<comment type="cofactor">
    <cofactor evidence="1">
        <name>thiamine diphosphate</name>
        <dbReference type="ChEBI" id="CHEBI:58937"/>
    </cofactor>
    <text evidence="1">Binds 1 thiamine pyrophosphate per subunit.</text>
</comment>
<comment type="pathway">
    <text evidence="1">Metabolic intermediate biosynthesis; 1-deoxy-D-xylulose 5-phosphate biosynthesis; 1-deoxy-D-xylulose 5-phosphate from D-glyceraldehyde 3-phosphate and pyruvate: step 1/1.</text>
</comment>
<comment type="subunit">
    <text evidence="1">Homodimer.</text>
</comment>
<comment type="similarity">
    <text evidence="1">Belongs to the transketolase family. DXPS subfamily.</text>
</comment>
<keyword id="KW-0414">Isoprene biosynthesis</keyword>
<keyword id="KW-0460">Magnesium</keyword>
<keyword id="KW-0479">Metal-binding</keyword>
<keyword id="KW-0784">Thiamine biosynthesis</keyword>
<keyword id="KW-0786">Thiamine pyrophosphate</keyword>
<keyword id="KW-0808">Transferase</keyword>
<organism>
    <name type="scientific">Xanthomonas oryzae pv. oryzae (strain PXO99A)</name>
    <dbReference type="NCBI Taxonomy" id="360094"/>
    <lineage>
        <taxon>Bacteria</taxon>
        <taxon>Pseudomonadati</taxon>
        <taxon>Pseudomonadota</taxon>
        <taxon>Gammaproteobacteria</taxon>
        <taxon>Lysobacterales</taxon>
        <taxon>Lysobacteraceae</taxon>
        <taxon>Xanthomonas</taxon>
    </lineage>
</organism>
<name>DXS_XANOP</name>
<gene>
    <name evidence="1" type="primary">dxs</name>
    <name type="ordered locus">PXO_01171</name>
</gene>
<evidence type="ECO:0000255" key="1">
    <source>
        <dbReference type="HAMAP-Rule" id="MF_00315"/>
    </source>
</evidence>
<protein>
    <recommendedName>
        <fullName evidence="1">1-deoxy-D-xylulose-5-phosphate synthase</fullName>
        <ecNumber evidence="1">2.2.1.7</ecNumber>
    </recommendedName>
    <alternativeName>
        <fullName evidence="1">1-deoxyxylulose-5-phosphate synthase</fullName>
        <shortName evidence="1">DXP synthase</shortName>
        <shortName evidence="1">DXPS</shortName>
    </alternativeName>
</protein>
<accession>B2SQV8</accession>